<comment type="function">
    <text evidence="3 6 8 10">Catalyzes the phosphorylation of hexose, such as D-glucose, D-fructose and D-mannose, to hexose 6-phosphate (D-glucose 6-phosphate, D-fructose 6-phosphate and D-mannose 6-phosphate, respectively) (PubMed:12513690, PubMed:24187134, PubMed:6477520). Compared to other hexokinases, has a weak affinity for D-glucose, and is effective only when glucose is abundant (PubMed:6477520). Mainly expressed in pancreatic beta cells and the liver and constitutes a rate-limiting step in glucose metabolism in these tissues (By similarity). Since insulin secretion parallels glucose metabolism and the low glucose affinity of GCK ensures that it can change its enzymatic activity within the physiological range of glucose concentrations, GCK acts as a glucose sensor in the pancreatic beta cell (By similarity). In pancreas, plays an important role in modulating insulin secretion (By similarity). In liver, helps to facilitate the uptake and conversion of glucose by acting as an insulin-sensitive determinant of hepatic glucose usage (By similarity). Required to provide D-glucose 6-phosphate for the synthesis of glycogen (By similarity). Mediates the initial step of glycolysis by catalyzing phosphorylation of D-glucose to D-glucose 6-phosphate (PubMed:12513690, PubMed:6477520).</text>
</comment>
<comment type="catalytic activity">
    <reaction evidence="6 10">
        <text>a D-hexose + ATP = a D-hexose 6-phosphate + ADP + H(+)</text>
        <dbReference type="Rhea" id="RHEA:22740"/>
        <dbReference type="ChEBI" id="CHEBI:4194"/>
        <dbReference type="ChEBI" id="CHEBI:15378"/>
        <dbReference type="ChEBI" id="CHEBI:30616"/>
        <dbReference type="ChEBI" id="CHEBI:229467"/>
        <dbReference type="ChEBI" id="CHEBI:456216"/>
        <dbReference type="EC" id="2.7.1.1"/>
    </reaction>
    <physiologicalReaction direction="left-to-right" evidence="6 10">
        <dbReference type="Rhea" id="RHEA:22741"/>
    </physiologicalReaction>
</comment>
<comment type="catalytic activity">
    <reaction evidence="10">
        <text>D-fructose + ATP = D-fructose 6-phosphate + ADP + H(+)</text>
        <dbReference type="Rhea" id="RHEA:16125"/>
        <dbReference type="ChEBI" id="CHEBI:15378"/>
        <dbReference type="ChEBI" id="CHEBI:30616"/>
        <dbReference type="ChEBI" id="CHEBI:37721"/>
        <dbReference type="ChEBI" id="CHEBI:61527"/>
        <dbReference type="ChEBI" id="CHEBI:456216"/>
        <dbReference type="EC" id="2.7.1.1"/>
    </reaction>
    <physiologicalReaction direction="left-to-right" evidence="10">
        <dbReference type="Rhea" id="RHEA:16126"/>
    </physiologicalReaction>
</comment>
<comment type="catalytic activity">
    <reaction evidence="6 10">
        <text>D-glucose + ATP = D-glucose 6-phosphate + ADP + H(+)</text>
        <dbReference type="Rhea" id="RHEA:17825"/>
        <dbReference type="ChEBI" id="CHEBI:4167"/>
        <dbReference type="ChEBI" id="CHEBI:15378"/>
        <dbReference type="ChEBI" id="CHEBI:30616"/>
        <dbReference type="ChEBI" id="CHEBI:61548"/>
        <dbReference type="ChEBI" id="CHEBI:456216"/>
        <dbReference type="EC" id="2.7.1.1"/>
    </reaction>
    <physiologicalReaction direction="left-to-right" evidence="6 10">
        <dbReference type="Rhea" id="RHEA:17826"/>
    </physiologicalReaction>
</comment>
<comment type="catalytic activity">
    <reaction evidence="2">
        <text>D-mannose + ATP = D-mannose 6-phosphate + ADP + H(+)</text>
        <dbReference type="Rhea" id="RHEA:11028"/>
        <dbReference type="ChEBI" id="CHEBI:4208"/>
        <dbReference type="ChEBI" id="CHEBI:15378"/>
        <dbReference type="ChEBI" id="CHEBI:30616"/>
        <dbReference type="ChEBI" id="CHEBI:58735"/>
        <dbReference type="ChEBI" id="CHEBI:456216"/>
        <dbReference type="EC" id="2.7.1.1"/>
    </reaction>
    <physiologicalReaction direction="left-to-right" evidence="2">
        <dbReference type="Rhea" id="RHEA:11029"/>
    </physiologicalReaction>
</comment>
<comment type="activity regulation">
    <text evidence="2 5">Subject to allosteric regulation (By similarity). Low glucose and high fructose-6-phosphate triggers association with the inhibitor GCKR followed by sequestration in the nucleus (PubMed:10456334).</text>
</comment>
<comment type="pathway">
    <text evidence="14 15">Carbohydrate metabolism; hexose metabolism.</text>
</comment>
<comment type="pathway">
    <text evidence="14 15">Carbohydrate degradation; glycolysis; D-glyceraldehyde 3-phosphate and glycerone phosphate from D-glucose: step 1/4.</text>
</comment>
<comment type="subunit">
    <text evidence="2 5 7 8">Monomer (By similarity). Interacts with MIDN; the interaction occurs preferentially at low glucose levels and results in inhibition of hexokinase activity (PubMed:24187134). Interacts with GCKR; leading to sequestration in the nucleus (PubMed:10456334, PubMed:16542652).</text>
</comment>
<comment type="subcellular location">
    <subcellularLocation>
        <location evidence="5 7">Cytoplasm</location>
    </subcellularLocation>
    <subcellularLocation>
        <location evidence="5">Nucleus</location>
    </subcellularLocation>
    <subcellularLocation>
        <location evidence="7">Mitochondrion</location>
    </subcellularLocation>
    <text evidence="5">Under low glucose concentrations, associates with GCKR and the inactive complex is recruited to the hepatocyte nucleus.</text>
</comment>
<comment type="alternative products">
    <event type="alternative promoter"/>
    <event type="alternative splicing"/>
    <isoform>
        <id>P17712-1</id>
        <name>1</name>
        <sequence type="displayed"/>
    </isoform>
    <isoform>
        <id>P17712-2</id>
        <name>2</name>
        <sequence type="described" ref="VSP_002078"/>
    </isoform>
    <isoform>
        <id>P17712-3</id>
        <name>3</name>
        <sequence type="described" ref="VSP_002077"/>
    </isoform>
    <text evidence="2">A number of isoforms are produced by alternative promoter usage. The use of alternative promoters apparently enables the type IV hexokinase gene to be regulated by insulin in the liver and glucose in the beta cell. This may constitute an important feedback loop for maintaining glucose homeostasis.</text>
</comment>
<comment type="tissue specificity">
    <text evidence="9">Expression is restricted to the liver and pancreatic islets (at protein level).</text>
</comment>
<comment type="similarity">
    <text evidence="4 13">Belongs to the hexokinase family.</text>
</comment>
<keyword id="KW-0021">Allosteric enzyme</keyword>
<keyword id="KW-0877">Alternative promoter usage</keyword>
<keyword id="KW-0025">Alternative splicing</keyword>
<keyword id="KW-0067">ATP-binding</keyword>
<keyword id="KW-0963">Cytoplasm</keyword>
<keyword id="KW-0903">Direct protein sequencing</keyword>
<keyword id="KW-0324">Glycolysis</keyword>
<keyword id="KW-0418">Kinase</keyword>
<keyword id="KW-0496">Mitochondrion</keyword>
<keyword id="KW-0547">Nucleotide-binding</keyword>
<keyword id="KW-0539">Nucleus</keyword>
<keyword id="KW-1185">Reference proteome</keyword>
<keyword id="KW-0808">Transferase</keyword>
<protein>
    <recommendedName>
        <fullName evidence="13">Hexokinase-4</fullName>
        <shortName evidence="13">HK4</shortName>
        <ecNumber evidence="6 10">2.7.1.1</ecNumber>
    </recommendedName>
    <alternativeName>
        <fullName evidence="11">Glucokinase</fullName>
    </alternativeName>
    <alternativeName>
        <fullName evidence="12">Hexokinase type IV</fullName>
        <shortName evidence="12">HK IV</shortName>
    </alternativeName>
    <alternativeName>
        <fullName evidence="12">Hexokinase-D</fullName>
    </alternativeName>
</protein>
<reference key="1">
    <citation type="journal article" date="1989" name="J. Biol. Chem.">
        <title>The amino acid sequence of rat liver glucokinase deduced from cloned cDNA.</title>
        <authorList>
            <person name="Andreone T.L."/>
            <person name="Printz R.L."/>
            <person name="Pilkis S.J."/>
            <person name="Magnuson M.A."/>
            <person name="Granner D.K."/>
        </authorList>
    </citation>
    <scope>NUCLEOTIDE SEQUENCE [MRNA] (ISOFORM 3)</scope>
    <scope>PARTIAL PROTEIN SEQUENCE</scope>
    <source>
        <tissue>Liver</tissue>
    </source>
</reference>
<reference key="2">
    <citation type="journal article" date="1990" name="Biochem. J.">
        <title>Alternative splicing of glucokinase mRNA in rat liver.</title>
        <authorList>
            <person name="Hayzer D.J."/>
            <person name="Iynedjian P.B."/>
        </authorList>
    </citation>
    <scope>NUCLEOTIDE SEQUENCE [GENOMIC DNA / MRNA]</scope>
    <scope>ALTERNATIVE SPLICING</scope>
    <source>
        <tissue>Liver</tissue>
    </source>
</reference>
<reference key="3">
    <citation type="journal article" date="1989" name="J. Biol. Chem.">
        <title>An alternate promoter in the glucokinase gene is active in the pancreatic beta cell.</title>
        <authorList>
            <person name="Magnuson M.A."/>
            <person name="Shelton K.D."/>
        </authorList>
    </citation>
    <scope>NUCLEOTIDE SEQUENCE [GENOMIC DNA / MRNA] OF 1-15 (ISOFORM 1)</scope>
    <source>
        <tissue>Pancreas</tissue>
    </source>
</reference>
<reference key="4">
    <citation type="journal article" date="1989" name="Proc. Natl. Acad. Sci. U.S.A.">
        <title>Rat glucokinase gene: structure and regulation by insulin.</title>
        <authorList>
            <person name="Magnuson M.A."/>
            <person name="Andeone T.L."/>
            <person name="Printz R.L."/>
            <person name="Koch S."/>
            <person name="Granner D.K."/>
        </authorList>
    </citation>
    <scope>NUCLEOTIDE SEQUENCE [GENOMIC DNA] OF 1-15 (ISOFORM 3)</scope>
</reference>
<reference key="5">
    <citation type="journal article" date="1989" name="Biochem. Biophys. Res. Commun.">
        <title>Characterization of the 5' flanking region of rat glucokinase gene.</title>
        <authorList>
            <person name="Noguchi T."/>
            <person name="Takenaka M."/>
            <person name="Yamada K."/>
            <person name="Matsuda T."/>
            <person name="Hashimoto M."/>
            <person name="Tanaka T."/>
        </authorList>
    </citation>
    <scope>NUCLEOTIDE SEQUENCE [GENOMIC DNA] OF 1-15 (ISOFORM 3)</scope>
</reference>
<reference key="6">
    <citation type="journal article" date="1991" name="J. Biol. Chem.">
        <title>Expression of normal and novel glucokinase mRNAs in anterior pituitary and islet cells.</title>
        <authorList>
            <person name="Hughes S.D."/>
            <person name="Quaade C."/>
            <person name="Milburn J.L."/>
            <person name="Cassidy L."/>
            <person name="Newgard C.B."/>
        </authorList>
    </citation>
    <scope>NUCLEOTIDE SEQUENCE [MRNA] OF 1-166 (ISOFORM 1)</scope>
</reference>
<reference key="7">
    <citation type="journal article" date="1984" name="Biochem. J.">
        <title>Fructose is a good substrate for rat liver 'glucokinase' (hexokinase D).</title>
        <authorList>
            <person name="Cardenas M.L."/>
            <person name="Rabajille E."/>
            <person name="Niemeyer H."/>
        </authorList>
    </citation>
    <scope>FUNCTION</scope>
    <scope>CATALYTIC ACTIVITY</scope>
</reference>
<reference key="8">
    <citation type="journal article" date="1986" name="Proc. Natl. Acad. Sci. U.S.A.">
        <title>Tissue-specific expression of glucokinase: identification of the gene product in liver and pancreatic islets.</title>
        <authorList>
            <person name="Iynedjian P.B."/>
            <person name="Moebius G."/>
            <person name="Seitz H.J."/>
            <person name="Wollheim C.B."/>
            <person name="Renold A.E."/>
        </authorList>
    </citation>
    <scope>TISSUE SPECIFICITY</scope>
</reference>
<reference key="9">
    <citation type="journal article" date="1999" name="FEBS Lett.">
        <title>Glucokinase regulatory protein is essential for the proper subcellular localisation of liver glucokinase.</title>
        <authorList>
            <person name="de la Iglesia N."/>
            <person name="Veiga-da-Cunha M."/>
            <person name="Van Schaftingen E."/>
            <person name="Guinovart J.J."/>
            <person name="Ferrer J.C."/>
        </authorList>
    </citation>
    <scope>ACTIVITY REGULATION</scope>
    <scope>INTERACTION WITH GCKR</scope>
    <scope>SUBCELLULAR LOCATION</scope>
</reference>
<reference key="10">
    <citation type="journal article" date="2003" name="Biochem. J.">
        <title>Kinetic studies of rat liver hexokinase D ('glucokinase') in non-co-operative conditions show an ordered mechanism with MgADP as the last product to be released.</title>
        <authorList>
            <person name="Monasterio O."/>
            <person name="Cardenas M.L."/>
        </authorList>
    </citation>
    <scope>FUNCTION</scope>
    <scope>CATALYTIC ACTIVITY</scope>
</reference>
<reference key="11">
    <citation type="journal article" date="2006" name="FEBS Lett.">
        <title>Glucokinase regulatory protein is associated with mitochondria in hepatocytes.</title>
        <authorList>
            <person name="Arden C."/>
            <person name="Baltrusch S."/>
            <person name="Agius L."/>
        </authorList>
    </citation>
    <scope>SUBCELLULAR LOCATION</scope>
    <scope>INTERACTION WITH GCKR</scope>
</reference>
<reference key="12">
    <citation type="journal article" date="2013" name="J. Biol. Chem.">
        <title>Identification of the ubiquitin-like domain of midnolin as a new glucokinase interaction partner.</title>
        <authorList>
            <person name="Hofmeister-Brix A."/>
            <person name="Kollmann K."/>
            <person name="Langer S."/>
            <person name="Schultz J."/>
            <person name="Lenzen S."/>
            <person name="Baltrusch S."/>
        </authorList>
    </citation>
    <scope>INTERACTION WITH MIDN</scope>
    <scope>FUNCTION</scope>
</reference>
<gene>
    <name evidence="16" type="primary">Gck</name>
</gene>
<dbReference type="EC" id="2.7.1.1" evidence="6 10"/>
<dbReference type="EMBL" id="J04218">
    <property type="protein sequence ID" value="AAA41229.1"/>
    <property type="molecule type" value="mRNA"/>
</dbReference>
<dbReference type="EMBL" id="M24952">
    <property type="protein sequence ID" value="AAA41230.1"/>
    <property type="molecule type" value="Genomic_DNA"/>
</dbReference>
<dbReference type="EMBL" id="M24943">
    <property type="protein sequence ID" value="AAA41230.1"/>
    <property type="status" value="JOINED"/>
    <property type="molecule type" value="Genomic_DNA"/>
</dbReference>
<dbReference type="EMBL" id="M24944">
    <property type="protein sequence ID" value="AAA41230.1"/>
    <property type="status" value="JOINED"/>
    <property type="molecule type" value="Genomic_DNA"/>
</dbReference>
<dbReference type="EMBL" id="M24945">
    <property type="protein sequence ID" value="AAA41230.1"/>
    <property type="status" value="JOINED"/>
    <property type="molecule type" value="Genomic_DNA"/>
</dbReference>
<dbReference type="EMBL" id="M24947">
    <property type="protein sequence ID" value="AAA41230.1"/>
    <property type="status" value="JOINED"/>
    <property type="molecule type" value="Genomic_DNA"/>
</dbReference>
<dbReference type="EMBL" id="M24948">
    <property type="protein sequence ID" value="AAA41230.1"/>
    <property type="status" value="JOINED"/>
    <property type="molecule type" value="Genomic_DNA"/>
</dbReference>
<dbReference type="EMBL" id="M24949">
    <property type="protein sequence ID" value="AAA41230.1"/>
    <property type="status" value="JOINED"/>
    <property type="molecule type" value="Genomic_DNA"/>
</dbReference>
<dbReference type="EMBL" id="M24950">
    <property type="protein sequence ID" value="AAA41230.1"/>
    <property type="status" value="JOINED"/>
    <property type="molecule type" value="Genomic_DNA"/>
</dbReference>
<dbReference type="EMBL" id="M24951">
    <property type="protein sequence ID" value="AAA41230.1"/>
    <property type="status" value="JOINED"/>
    <property type="molecule type" value="Genomic_DNA"/>
</dbReference>
<dbReference type="EMBL" id="M25806">
    <property type="protein sequence ID" value="AAA41238.1"/>
    <property type="molecule type" value="Genomic_DNA"/>
</dbReference>
<dbReference type="EMBL" id="M25807">
    <property type="protein sequence ID" value="AAA41239.1"/>
    <property type="molecule type" value="mRNA"/>
</dbReference>
<dbReference type="EMBL" id="M58759">
    <property type="protein sequence ID" value="AAA41236.1"/>
    <property type="molecule type" value="mRNA"/>
</dbReference>
<dbReference type="EMBL" id="X53588">
    <property type="protein sequence ID" value="CAA37657.1"/>
    <property type="molecule type" value="mRNA"/>
</dbReference>
<dbReference type="EMBL" id="X53590">
    <property type="protein sequence ID" value="CAA37660.1"/>
    <property type="molecule type" value="Genomic_DNA"/>
</dbReference>
<dbReference type="EMBL" id="M30770">
    <property type="protein sequence ID" value="AAA41231.1"/>
    <property type="molecule type" value="Genomic_DNA"/>
</dbReference>
<dbReference type="PIR" id="A31810">
    <property type="entry name" value="A31810"/>
</dbReference>
<dbReference type="PIR" id="I84740">
    <property type="entry name" value="I84740"/>
</dbReference>
<dbReference type="RefSeq" id="NP_001257779.1">
    <molecule id="P17712-2"/>
    <property type="nucleotide sequence ID" value="NM_001270850.1"/>
</dbReference>
<dbReference type="RefSeq" id="NP_036697.1">
    <molecule id="P17712-3"/>
    <property type="nucleotide sequence ID" value="NM_012565.2"/>
</dbReference>
<dbReference type="RefSeq" id="XP_006251241.1">
    <molecule id="P17712-1"/>
    <property type="nucleotide sequence ID" value="XM_006251179.5"/>
</dbReference>
<dbReference type="SMR" id="P17712"/>
<dbReference type="FunCoup" id="P17712">
    <property type="interactions" value="575"/>
</dbReference>
<dbReference type="IntAct" id="P17712">
    <property type="interactions" value="2"/>
</dbReference>
<dbReference type="MINT" id="P17712"/>
<dbReference type="STRING" id="10116.ENSRNOP00000068656"/>
<dbReference type="BindingDB" id="P17712"/>
<dbReference type="ChEMBL" id="CHEMBL3882"/>
<dbReference type="PhosphoSitePlus" id="P17712"/>
<dbReference type="PaxDb" id="10116-ENSRNOP00000019625"/>
<dbReference type="Ensembl" id="ENSRNOT00000086343.2">
    <molecule id="P17712-3"/>
    <property type="protein sequence ID" value="ENSRNOP00000071435.1"/>
    <property type="gene ID" value="ENSRNOG00000061527.2"/>
</dbReference>
<dbReference type="Ensembl" id="ENSRNOT00000086474.2">
    <molecule id="P17712-1"/>
    <property type="protein sequence ID" value="ENSRNOP00000069954.2"/>
    <property type="gene ID" value="ENSRNOG00000061527.2"/>
</dbReference>
<dbReference type="GeneID" id="24385"/>
<dbReference type="KEGG" id="rno:24385"/>
<dbReference type="UCSC" id="RGD:2670">
    <molecule id="P17712-1"/>
    <property type="organism name" value="rat"/>
</dbReference>
<dbReference type="AGR" id="RGD:2670"/>
<dbReference type="CTD" id="2645"/>
<dbReference type="RGD" id="2670">
    <property type="gene designation" value="Gck"/>
</dbReference>
<dbReference type="eggNOG" id="KOG1369">
    <property type="taxonomic scope" value="Eukaryota"/>
</dbReference>
<dbReference type="GeneTree" id="ENSGT00950000182787"/>
<dbReference type="InParanoid" id="P17712"/>
<dbReference type="PhylomeDB" id="P17712"/>
<dbReference type="BRENDA" id="2.7.1.1">
    <property type="organism ID" value="5301"/>
</dbReference>
<dbReference type="Reactome" id="R-RNO-170822">
    <property type="pathway name" value="Regulation of Glucokinase by Glucokinase Regulatory Protein"/>
</dbReference>
<dbReference type="Reactome" id="R-RNO-70171">
    <property type="pathway name" value="Glycolysis"/>
</dbReference>
<dbReference type="SABIO-RK" id="P17712"/>
<dbReference type="UniPathway" id="UPA00109">
    <property type="reaction ID" value="UER00180"/>
</dbReference>
<dbReference type="UniPathway" id="UPA00242"/>
<dbReference type="PRO" id="PR:P17712"/>
<dbReference type="Proteomes" id="UP000002494">
    <property type="component" value="Chromosome 14"/>
</dbReference>
<dbReference type="Bgee" id="ENSRNOG00000061527">
    <property type="expression patterns" value="Expressed in liver and 4 other cell types or tissues"/>
</dbReference>
<dbReference type="ExpressionAtlas" id="P17712">
    <property type="expression patterns" value="baseline and differential"/>
</dbReference>
<dbReference type="GO" id="GO:0005884">
    <property type="term" value="C:actin filament"/>
    <property type="evidence" value="ECO:0000314"/>
    <property type="project" value="RGD"/>
</dbReference>
<dbReference type="GO" id="GO:0045180">
    <property type="term" value="C:basal cortex"/>
    <property type="evidence" value="ECO:0000314"/>
    <property type="project" value="RGD"/>
</dbReference>
<dbReference type="GO" id="GO:0005938">
    <property type="term" value="C:cell cortex"/>
    <property type="evidence" value="ECO:0000314"/>
    <property type="project" value="RGD"/>
</dbReference>
<dbReference type="GO" id="GO:0005737">
    <property type="term" value="C:cytoplasm"/>
    <property type="evidence" value="ECO:0000314"/>
    <property type="project" value="BHF-UCL"/>
</dbReference>
<dbReference type="GO" id="GO:0005829">
    <property type="term" value="C:cytosol"/>
    <property type="evidence" value="ECO:0000266"/>
    <property type="project" value="RGD"/>
</dbReference>
<dbReference type="GO" id="GO:0005739">
    <property type="term" value="C:mitochondrion"/>
    <property type="evidence" value="ECO:0000266"/>
    <property type="project" value="RGD"/>
</dbReference>
<dbReference type="GO" id="GO:0005654">
    <property type="term" value="C:nucleoplasm"/>
    <property type="evidence" value="ECO:0000314"/>
    <property type="project" value="RGD"/>
</dbReference>
<dbReference type="GO" id="GO:0005634">
    <property type="term" value="C:nucleus"/>
    <property type="evidence" value="ECO:0000314"/>
    <property type="project" value="BHF-UCL"/>
</dbReference>
<dbReference type="GO" id="GO:0030141">
    <property type="term" value="C:secretory granule"/>
    <property type="evidence" value="ECO:0000314"/>
    <property type="project" value="RGD"/>
</dbReference>
<dbReference type="GO" id="GO:0043531">
    <property type="term" value="F:ADP binding"/>
    <property type="evidence" value="ECO:0000314"/>
    <property type="project" value="RGD"/>
</dbReference>
<dbReference type="GO" id="GO:0005524">
    <property type="term" value="F:ATP binding"/>
    <property type="evidence" value="ECO:0000314"/>
    <property type="project" value="RGD"/>
</dbReference>
<dbReference type="GO" id="GO:0005536">
    <property type="term" value="F:D-glucose binding"/>
    <property type="evidence" value="ECO:0000314"/>
    <property type="project" value="RGD"/>
</dbReference>
<dbReference type="GO" id="GO:0008865">
    <property type="term" value="F:fructokinase activity"/>
    <property type="evidence" value="ECO:0000314"/>
    <property type="project" value="UniProtKB"/>
</dbReference>
<dbReference type="GO" id="GO:0004340">
    <property type="term" value="F:glucokinase activity"/>
    <property type="evidence" value="ECO:0000314"/>
    <property type="project" value="UniProtKB"/>
</dbReference>
<dbReference type="GO" id="GO:0141089">
    <property type="term" value="F:glucose sensor activity"/>
    <property type="evidence" value="ECO:0000314"/>
    <property type="project" value="BHF-UCL"/>
</dbReference>
<dbReference type="GO" id="GO:0004396">
    <property type="term" value="F:hexokinase activity"/>
    <property type="evidence" value="ECO:0000266"/>
    <property type="project" value="RGD"/>
</dbReference>
<dbReference type="GO" id="GO:0000287">
    <property type="term" value="F:magnesium ion binding"/>
    <property type="evidence" value="ECO:0000314"/>
    <property type="project" value="RGD"/>
</dbReference>
<dbReference type="GO" id="GO:0019158">
    <property type="term" value="F:mannokinase activity"/>
    <property type="evidence" value="ECO:0000314"/>
    <property type="project" value="UniProtKB"/>
</dbReference>
<dbReference type="GO" id="GO:0019903">
    <property type="term" value="F:protein phosphatase binding"/>
    <property type="evidence" value="ECO:0000353"/>
    <property type="project" value="RGD"/>
</dbReference>
<dbReference type="GO" id="GO:0070509">
    <property type="term" value="P:calcium ion import"/>
    <property type="evidence" value="ECO:0000266"/>
    <property type="project" value="RGD"/>
</dbReference>
<dbReference type="GO" id="GO:0046835">
    <property type="term" value="P:carbohydrate phosphorylation"/>
    <property type="evidence" value="ECO:0000314"/>
    <property type="project" value="RGD"/>
</dbReference>
<dbReference type="GO" id="GO:0042149">
    <property type="term" value="P:cellular response to glucose starvation"/>
    <property type="evidence" value="ECO:0000315"/>
    <property type="project" value="RGD"/>
</dbReference>
<dbReference type="GO" id="GO:0032869">
    <property type="term" value="P:cellular response to insulin stimulus"/>
    <property type="evidence" value="ECO:0000314"/>
    <property type="project" value="BHF-UCL"/>
</dbReference>
<dbReference type="GO" id="GO:0044320">
    <property type="term" value="P:cellular response to leptin stimulus"/>
    <property type="evidence" value="ECO:0000314"/>
    <property type="project" value="BHF-UCL"/>
</dbReference>
<dbReference type="GO" id="GO:0006003">
    <property type="term" value="P:fructose 2,6-bisphosphate metabolic process"/>
    <property type="evidence" value="ECO:0000314"/>
    <property type="project" value="RGD"/>
</dbReference>
<dbReference type="GO" id="GO:0006002">
    <property type="term" value="P:fructose 6-phosphate metabolic process"/>
    <property type="evidence" value="ECO:0000314"/>
    <property type="project" value="UniProtKB"/>
</dbReference>
<dbReference type="GO" id="GO:0051156">
    <property type="term" value="P:glucose 6-phosphate metabolic process"/>
    <property type="evidence" value="ECO:0000314"/>
    <property type="project" value="UniProtKB"/>
</dbReference>
<dbReference type="GO" id="GO:0006007">
    <property type="term" value="P:glucose catabolic process"/>
    <property type="evidence" value="ECO:0000250"/>
    <property type="project" value="UniProtKB"/>
</dbReference>
<dbReference type="GO" id="GO:0042593">
    <property type="term" value="P:glucose homeostasis"/>
    <property type="evidence" value="ECO:0000250"/>
    <property type="project" value="UniProtKB"/>
</dbReference>
<dbReference type="GO" id="GO:0006006">
    <property type="term" value="P:glucose metabolic process"/>
    <property type="evidence" value="ECO:0000314"/>
    <property type="project" value="RGD"/>
</dbReference>
<dbReference type="GO" id="GO:0005978">
    <property type="term" value="P:glycogen biosynthetic process"/>
    <property type="evidence" value="ECO:0000314"/>
    <property type="project" value="RGD"/>
</dbReference>
<dbReference type="GO" id="GO:0006096">
    <property type="term" value="P:glycolytic process"/>
    <property type="evidence" value="ECO:0000314"/>
    <property type="project" value="RGD"/>
</dbReference>
<dbReference type="GO" id="GO:0001678">
    <property type="term" value="P:intracellular glucose homeostasis"/>
    <property type="evidence" value="ECO:0000315"/>
    <property type="project" value="RGD"/>
</dbReference>
<dbReference type="GO" id="GO:0055088">
    <property type="term" value="P:lipid homeostasis"/>
    <property type="evidence" value="ECO:0000314"/>
    <property type="project" value="RGD"/>
</dbReference>
<dbReference type="GO" id="GO:0006013">
    <property type="term" value="P:mannose metabolic process"/>
    <property type="evidence" value="ECO:0000314"/>
    <property type="project" value="UniProtKB"/>
</dbReference>
<dbReference type="GO" id="GO:0006739">
    <property type="term" value="P:NADP metabolic process"/>
    <property type="evidence" value="ECO:0000266"/>
    <property type="project" value="RGD"/>
</dbReference>
<dbReference type="GO" id="GO:0032811">
    <property type="term" value="P:negative regulation of epinephrine secretion"/>
    <property type="evidence" value="ECO:0000315"/>
    <property type="project" value="RGD"/>
</dbReference>
<dbReference type="GO" id="GO:0045721">
    <property type="term" value="P:negative regulation of gluconeogenesis"/>
    <property type="evidence" value="ECO:0000250"/>
    <property type="project" value="UniProtKB"/>
</dbReference>
<dbReference type="GO" id="GO:0007204">
    <property type="term" value="P:positive regulation of cytosolic calcium ion concentration"/>
    <property type="evidence" value="ECO:0000314"/>
    <property type="project" value="RGD"/>
</dbReference>
<dbReference type="GO" id="GO:0045725">
    <property type="term" value="P:positive regulation of glycogen biosynthetic process"/>
    <property type="evidence" value="ECO:0000250"/>
    <property type="project" value="UniProtKB"/>
</dbReference>
<dbReference type="GO" id="GO:0045821">
    <property type="term" value="P:positive regulation of glycolytic process"/>
    <property type="evidence" value="ECO:0000314"/>
    <property type="project" value="RGD"/>
</dbReference>
<dbReference type="GO" id="GO:0032024">
    <property type="term" value="P:positive regulation of insulin secretion"/>
    <property type="evidence" value="ECO:0000314"/>
    <property type="project" value="RGD"/>
</dbReference>
<dbReference type="GO" id="GO:0042327">
    <property type="term" value="P:positive regulation of phosphorylation"/>
    <property type="evidence" value="ECO:0000314"/>
    <property type="project" value="RGD"/>
</dbReference>
<dbReference type="GO" id="GO:1902659">
    <property type="term" value="P:regulation of glucose mediated signaling pathway"/>
    <property type="evidence" value="ECO:0000315"/>
    <property type="project" value="RGD"/>
</dbReference>
<dbReference type="GO" id="GO:0050796">
    <property type="term" value="P:regulation of insulin secretion"/>
    <property type="evidence" value="ECO:0000266"/>
    <property type="project" value="RGD"/>
</dbReference>
<dbReference type="GO" id="GO:0043266">
    <property type="term" value="P:regulation of potassium ion transport"/>
    <property type="evidence" value="ECO:0000266"/>
    <property type="project" value="RGD"/>
</dbReference>
<dbReference type="GO" id="GO:0009749">
    <property type="term" value="P:response to glucose"/>
    <property type="evidence" value="ECO:0000314"/>
    <property type="project" value="BHF-UCL"/>
</dbReference>
<dbReference type="CDD" id="cd24092">
    <property type="entry name" value="ASKHA_NBD_HK4_meta"/>
    <property type="match status" value="1"/>
</dbReference>
<dbReference type="FunFam" id="3.40.367.20:FF:000001">
    <property type="entry name" value="Hexokinase 1"/>
    <property type="match status" value="1"/>
</dbReference>
<dbReference type="FunFam" id="3.30.420.40:FF:000054">
    <property type="entry name" value="Phosphotransferase"/>
    <property type="match status" value="1"/>
</dbReference>
<dbReference type="Gene3D" id="3.30.420.40">
    <property type="match status" value="1"/>
</dbReference>
<dbReference type="Gene3D" id="3.40.367.20">
    <property type="match status" value="1"/>
</dbReference>
<dbReference type="InterPro" id="IPR043129">
    <property type="entry name" value="ATPase_NBD"/>
</dbReference>
<dbReference type="InterPro" id="IPR001312">
    <property type="entry name" value="Hexokinase"/>
</dbReference>
<dbReference type="InterPro" id="IPR019807">
    <property type="entry name" value="Hexokinase_BS"/>
</dbReference>
<dbReference type="InterPro" id="IPR022673">
    <property type="entry name" value="Hexokinase_C"/>
</dbReference>
<dbReference type="InterPro" id="IPR022672">
    <property type="entry name" value="Hexokinase_N"/>
</dbReference>
<dbReference type="PANTHER" id="PTHR19443">
    <property type="entry name" value="HEXOKINASE"/>
    <property type="match status" value="1"/>
</dbReference>
<dbReference type="PANTHER" id="PTHR19443:SF3">
    <property type="entry name" value="HEXOKINASE-4"/>
    <property type="match status" value="1"/>
</dbReference>
<dbReference type="Pfam" id="PF00349">
    <property type="entry name" value="Hexokinase_1"/>
    <property type="match status" value="1"/>
</dbReference>
<dbReference type="Pfam" id="PF03727">
    <property type="entry name" value="Hexokinase_2"/>
    <property type="match status" value="1"/>
</dbReference>
<dbReference type="PRINTS" id="PR00475">
    <property type="entry name" value="HEXOKINASE"/>
</dbReference>
<dbReference type="SUPFAM" id="SSF53067">
    <property type="entry name" value="Actin-like ATPase domain"/>
    <property type="match status" value="2"/>
</dbReference>
<dbReference type="PROSITE" id="PS00378">
    <property type="entry name" value="HEXOKINASE_1"/>
    <property type="match status" value="1"/>
</dbReference>
<dbReference type="PROSITE" id="PS51748">
    <property type="entry name" value="HEXOKINASE_2"/>
    <property type="match status" value="1"/>
</dbReference>
<proteinExistence type="evidence at protein level"/>
<feature type="chain" id="PRO_0000197595" description="Hexokinase-4">
    <location>
        <begin position="1"/>
        <end position="465"/>
    </location>
</feature>
<feature type="domain" description="Hexokinase" evidence="4">
    <location>
        <begin position="10"/>
        <end position="454"/>
    </location>
</feature>
<feature type="region of interest" description="Hexokinase small subdomain" evidence="4">
    <location>
        <begin position="67"/>
        <end position="203"/>
    </location>
</feature>
<feature type="region of interest" description="Hexokinase large subdomain" evidence="4">
    <location>
        <begin position="204"/>
        <end position="443"/>
    </location>
</feature>
<feature type="binding site" evidence="1">
    <location>
        <begin position="78"/>
        <end position="83"/>
    </location>
    <ligand>
        <name>ATP</name>
        <dbReference type="ChEBI" id="CHEBI:30616"/>
    </ligand>
</feature>
<feature type="binding site" evidence="2">
    <location>
        <begin position="151"/>
        <end position="152"/>
    </location>
    <ligand>
        <name>substrate</name>
    </ligand>
</feature>
<feature type="binding site" evidence="2">
    <location>
        <begin position="168"/>
        <end position="169"/>
    </location>
    <ligand>
        <name>substrate</name>
    </ligand>
</feature>
<feature type="binding site" evidence="2">
    <location>
        <begin position="204"/>
        <end position="205"/>
    </location>
    <ligand>
        <name>substrate</name>
    </ligand>
</feature>
<feature type="binding site" evidence="2">
    <location>
        <position position="228"/>
    </location>
    <ligand>
        <name>ATP</name>
        <dbReference type="ChEBI" id="CHEBI:30616"/>
    </ligand>
</feature>
<feature type="binding site" evidence="2">
    <location>
        <position position="231"/>
    </location>
    <ligand>
        <name>substrate</name>
    </ligand>
</feature>
<feature type="binding site" evidence="2">
    <location>
        <position position="256"/>
    </location>
    <ligand>
        <name>substrate</name>
    </ligand>
</feature>
<feature type="binding site" evidence="2">
    <location>
        <position position="290"/>
    </location>
    <ligand>
        <name>substrate</name>
    </ligand>
</feature>
<feature type="binding site" evidence="2">
    <location>
        <begin position="295"/>
        <end position="296"/>
    </location>
    <ligand>
        <name>ATP</name>
        <dbReference type="ChEBI" id="CHEBI:30616"/>
    </ligand>
</feature>
<feature type="binding site" evidence="2">
    <location>
        <begin position="332"/>
        <end position="336"/>
    </location>
    <ligand>
        <name>ATP</name>
        <dbReference type="ChEBI" id="CHEBI:30616"/>
    </ligand>
</feature>
<feature type="binding site" evidence="2">
    <location>
        <begin position="411"/>
        <end position="415"/>
    </location>
    <ligand>
        <name>ATP</name>
        <dbReference type="ChEBI" id="CHEBI:30616"/>
    </ligand>
</feature>
<feature type="splice variant" id="VSP_002077" description="In isoform 3." evidence="11">
    <original>MLDDRARMEATKKEK</original>
    <variation>MAMDTTRCGAQLLTL</variation>
    <location>
        <begin position="1"/>
        <end position="15"/>
    </location>
</feature>
<feature type="splice variant" id="VSP_002078" description="In isoform 2." evidence="13">
    <location>
        <begin position="122"/>
        <end position="138"/>
    </location>
</feature>
<evidence type="ECO:0000250" key="1">
    <source>
        <dbReference type="UniProtKB" id="P19367"/>
    </source>
</evidence>
<evidence type="ECO:0000250" key="2">
    <source>
        <dbReference type="UniProtKB" id="P35557"/>
    </source>
</evidence>
<evidence type="ECO:0000250" key="3">
    <source>
        <dbReference type="UniProtKB" id="P52792"/>
    </source>
</evidence>
<evidence type="ECO:0000255" key="4">
    <source>
        <dbReference type="PROSITE-ProRule" id="PRU01084"/>
    </source>
</evidence>
<evidence type="ECO:0000269" key="5">
    <source>
    </source>
</evidence>
<evidence type="ECO:0000269" key="6">
    <source>
    </source>
</evidence>
<evidence type="ECO:0000269" key="7">
    <source>
    </source>
</evidence>
<evidence type="ECO:0000269" key="8">
    <source>
    </source>
</evidence>
<evidence type="ECO:0000269" key="9">
    <source>
    </source>
</evidence>
<evidence type="ECO:0000269" key="10">
    <source>
    </source>
</evidence>
<evidence type="ECO:0000303" key="11">
    <source>
    </source>
</evidence>
<evidence type="ECO:0000303" key="12">
    <source>
    </source>
</evidence>
<evidence type="ECO:0000305" key="13"/>
<evidence type="ECO:0000305" key="14">
    <source>
    </source>
</evidence>
<evidence type="ECO:0000305" key="15">
    <source>
    </source>
</evidence>
<evidence type="ECO:0000312" key="16">
    <source>
        <dbReference type="RGD" id="2670"/>
    </source>
</evidence>
<sequence length="465" mass="52116">MLDDRARMEATKKEKVEQILAEFQLQEEDLKKVMSRMQKEMDRGLRLETHEEASVKMLPTYVRSTPEGSEVGDFLSLDLGGTNFRVMLVKVGEGEAGQWSVKTKHQMYSIPEDAMTGTAEMLFDYISECISDFLDKHQMKHKKLPLGFTFSFPVRHEDLDKGILLNWTKGFKASGAEGNNIVGLLRDAIKRRGDFEMDVVAMVNDTVATMISCYYEDRQCEVGMIVGTGCNACYMEEMQNVELVEGDEGRMCVNTEWGAFGDSGELDEFLLEYDRMVDESSANPGQQLYEKIIGGKYMGELVRLVLLKLVDENLLFHGEASEQLRTRGAFETRFVSQVESDSGDRKQIHNILSTLGLRPSVTDCDIVRRACESVSTRAAHMCSAGLAGVINRMRESRSEDVMRITVGVDGSVYKLHPSFKERFHASVRRLTPNCEITFIESEEGSGRGAALVSAVACKKACMLAQ</sequence>
<accession>P17712</accession>
<accession>P17711</accession>
<name>HXK4_RAT</name>
<organism>
    <name type="scientific">Rattus norvegicus</name>
    <name type="common">Rat</name>
    <dbReference type="NCBI Taxonomy" id="10116"/>
    <lineage>
        <taxon>Eukaryota</taxon>
        <taxon>Metazoa</taxon>
        <taxon>Chordata</taxon>
        <taxon>Craniata</taxon>
        <taxon>Vertebrata</taxon>
        <taxon>Euteleostomi</taxon>
        <taxon>Mammalia</taxon>
        <taxon>Eutheria</taxon>
        <taxon>Euarchontoglires</taxon>
        <taxon>Glires</taxon>
        <taxon>Rodentia</taxon>
        <taxon>Myomorpha</taxon>
        <taxon>Muroidea</taxon>
        <taxon>Muridae</taxon>
        <taxon>Murinae</taxon>
        <taxon>Rattus</taxon>
    </lineage>
</organism>